<organism>
    <name type="scientific">Escherichia coli (strain K12)</name>
    <dbReference type="NCBI Taxonomy" id="83333"/>
    <lineage>
        <taxon>Bacteria</taxon>
        <taxon>Pseudomonadati</taxon>
        <taxon>Pseudomonadota</taxon>
        <taxon>Gammaproteobacteria</taxon>
        <taxon>Enterobacterales</taxon>
        <taxon>Enterobacteriaceae</taxon>
        <taxon>Escherichia</taxon>
    </lineage>
</organism>
<protein>
    <recommendedName>
        <fullName>Glutamate decarboxylase beta</fullName>
        <shortName>GAD-beta</shortName>
        <ecNumber>4.1.1.15</ecNumber>
    </recommendedName>
</protein>
<reference key="1">
    <citation type="journal article" date="1992" name="J. Bacteriol.">
        <title>Escherichia coli has two homologous glutamate decarboxylase genes that map to distinct loci.</title>
        <authorList>
            <person name="Smith D.K."/>
            <person name="Kassam T."/>
            <person name="Singh B."/>
            <person name="Elliott J.F."/>
        </authorList>
    </citation>
    <scope>NUCLEOTIDE SEQUENCE [GENOMIC DNA]</scope>
    <source>
        <strain>K12</strain>
    </source>
</reference>
<reference key="2">
    <citation type="journal article" date="1996" name="DNA Res.">
        <title>A 570-kb DNA sequence of the Escherichia coli K-12 genome corresponding to the 28.0-40.1 min region on the linkage map.</title>
        <authorList>
            <person name="Aiba H."/>
            <person name="Baba T."/>
            <person name="Fujita K."/>
            <person name="Hayashi K."/>
            <person name="Inada T."/>
            <person name="Isono K."/>
            <person name="Itoh T."/>
            <person name="Kasai H."/>
            <person name="Kashimoto K."/>
            <person name="Kimura S."/>
            <person name="Kitakawa M."/>
            <person name="Kitagawa M."/>
            <person name="Makino K."/>
            <person name="Miki T."/>
            <person name="Mizobuchi K."/>
            <person name="Mori H."/>
            <person name="Mori T."/>
            <person name="Motomura K."/>
            <person name="Nakade S."/>
            <person name="Nakamura Y."/>
            <person name="Nashimoto H."/>
            <person name="Nishio Y."/>
            <person name="Oshima T."/>
            <person name="Saito N."/>
            <person name="Sampei G."/>
            <person name="Seki Y."/>
            <person name="Sivasundaram S."/>
            <person name="Tagami H."/>
            <person name="Takeda J."/>
            <person name="Takemoto K."/>
            <person name="Takeuchi Y."/>
            <person name="Wada C."/>
            <person name="Yamamoto Y."/>
            <person name="Horiuchi T."/>
        </authorList>
    </citation>
    <scope>NUCLEOTIDE SEQUENCE [LARGE SCALE GENOMIC DNA]</scope>
    <source>
        <strain>K12 / W3110 / ATCC 27325 / DSM 5911</strain>
    </source>
</reference>
<reference key="3">
    <citation type="journal article" date="1997" name="Science">
        <title>The complete genome sequence of Escherichia coli K-12.</title>
        <authorList>
            <person name="Blattner F.R."/>
            <person name="Plunkett G. III"/>
            <person name="Bloch C.A."/>
            <person name="Perna N.T."/>
            <person name="Burland V."/>
            <person name="Riley M."/>
            <person name="Collado-Vides J."/>
            <person name="Glasner J.D."/>
            <person name="Rode C.K."/>
            <person name="Mayhew G.F."/>
            <person name="Gregor J."/>
            <person name="Davis N.W."/>
            <person name="Kirkpatrick H.A."/>
            <person name="Goeden M.A."/>
            <person name="Rose D.J."/>
            <person name="Mau B."/>
            <person name="Shao Y."/>
        </authorList>
    </citation>
    <scope>NUCLEOTIDE SEQUENCE [LARGE SCALE GENOMIC DNA]</scope>
    <source>
        <strain>K12 / MG1655 / ATCC 47076</strain>
    </source>
</reference>
<reference key="4">
    <citation type="journal article" date="2006" name="Mol. Syst. Biol.">
        <title>Highly accurate genome sequences of Escherichia coli K-12 strains MG1655 and W3110.</title>
        <authorList>
            <person name="Hayashi K."/>
            <person name="Morooka N."/>
            <person name="Yamamoto Y."/>
            <person name="Fujita K."/>
            <person name="Isono K."/>
            <person name="Choi S."/>
            <person name="Ohtsubo E."/>
            <person name="Baba T."/>
            <person name="Wanner B.L."/>
            <person name="Mori H."/>
            <person name="Horiuchi T."/>
        </authorList>
    </citation>
    <scope>NUCLEOTIDE SEQUENCE [LARGE SCALE GENOMIC DNA]</scope>
    <source>
        <strain>K12 / W3110 / ATCC 27325 / DSM 5911</strain>
    </source>
</reference>
<reference key="5">
    <citation type="journal article" date="1996" name="Biochimie">
        <title>Sequence and functional analysis of an Escherichia coli DNA fragment able to complement pqqE and pqqF mutants from Methylobacterium organophilum.</title>
        <authorList>
            <person name="Turlin E."/>
            <person name="Gasser F."/>
            <person name="Biville F."/>
        </authorList>
    </citation>
    <scope>NUCLEOTIDE SEQUENCE [GENOMIC DNA] OF 1-318</scope>
    <source>
        <strain>K12</strain>
    </source>
</reference>
<reference key="6">
    <citation type="journal article" date="1993" name="Mol. Gen. Genet.">
        <title>Function of the Escherichia coli nucleoid protein, H-NS: molecular analysis of a subset of proteins whose expression is enhanced in a hns deletion mutant.</title>
        <authorList>
            <person name="Yoshida T."/>
            <person name="Ueguchi C."/>
            <person name="Yamada H."/>
            <person name="Mizuno T."/>
        </authorList>
    </citation>
    <scope>PROTEIN SEQUENCE OF 1-15</scope>
    <source>
        <strain>K12</strain>
    </source>
</reference>
<reference key="7">
    <citation type="journal article" date="1999" name="Mol. Microbiol.">
        <title>The response to stationary-phase stress conditions in Escherichia coli: role and regulation of the glutamic acid decarboxylase system.</title>
        <authorList>
            <person name="De Biase D."/>
            <person name="Tramonti A."/>
            <person name="Bossa F."/>
            <person name="Visca P."/>
        </authorList>
    </citation>
    <scope>TRANSCRIPTIONAL REGULATION</scope>
    <source>
        <strain>ATCC 11246</strain>
    </source>
</reference>
<reference key="8">
    <citation type="journal article" date="2002" name="Eur. J. Biochem.">
        <title>Contribution of Lys276 to the conformational flexibility of the active site of glutamate decarboxylase from Escherichia coli.</title>
        <authorList>
            <person name="Tramonti A."/>
            <person name="John R.A."/>
            <person name="Bossa F."/>
            <person name="De Biase D."/>
        </authorList>
    </citation>
    <scope>MUTAGENESIS OF LYS-276</scope>
    <source>
        <strain>K12 / JM109 / ATCC 53323</strain>
    </source>
</reference>
<reference key="9">
    <citation type="journal article" date="2002" name="J. Bacteriol.">
        <title>Functional characterization and regulation of gadX, a gene encoding an AraC/XylS-like transcriptional activator of the Escherichia coli glutamic acid decarboxylase system.</title>
        <authorList>
            <person name="Tramonti A."/>
            <person name="Visca P."/>
            <person name="De Canio M."/>
            <person name="Falconi M."/>
            <person name="De Biase D."/>
        </authorList>
    </citation>
    <scope>TRANSCRIPTIONAL REGULATION</scope>
    <source>
        <strain>ATCC 11246</strain>
    </source>
</reference>
<reference key="10">
    <citation type="journal article" date="2002" name="J. Bacteriol.">
        <title>Escherichia coli gene expression responsive to levels of the response regulator EvgA.</title>
        <authorList>
            <person name="Masuda N."/>
            <person name="Church G.M."/>
        </authorList>
    </citation>
    <scope>TRANSCRIPTIONAL REGULATION</scope>
    <source>
        <strain>K12 / MG1655 / ATCC 47076</strain>
    </source>
</reference>
<reference key="11">
    <citation type="journal article" date="2002" name="J. Bacteriol.">
        <title>Collaborative regulation of Escherichia coli glutamate-dependent acid resistance by two AraC-like regulators, GadX and GadW (YhiW).</title>
        <authorList>
            <person name="Ma Z."/>
            <person name="Richard H."/>
            <person name="Tucker D.L."/>
            <person name="Conway T."/>
            <person name="Foster J.W."/>
        </authorList>
    </citation>
    <scope>TRANSCRIPTIONAL REGULATION</scope>
    <source>
        <strain>K12</strain>
    </source>
</reference>
<reference key="12">
    <citation type="journal article" date="2003" name="J. Bacteriol.">
        <title>Transcriptional expression of Escherichia coli glutamate-dependent acid resistance genes gadA and gadBC in an hns rpoS mutant.</title>
        <authorList>
            <person name="Waterman S.R."/>
            <person name="Small P.L.C."/>
        </authorList>
    </citation>
    <scope>TRANSCRIPTIONAL REGULATION</scope>
</reference>
<reference key="13">
    <citation type="journal article" date="2003" name="Mol. Microbiol.">
        <title>Regulatory network of acid resistance genes in Escherichia coli.</title>
        <authorList>
            <person name="Masuda N."/>
            <person name="Church G.M."/>
        </authorList>
    </citation>
    <scope>TRANSCRIPTIONAL REGULATION</scope>
    <source>
        <strain>K12 / MG1655 / ATCC 47076</strain>
    </source>
</reference>
<reference key="14">
    <citation type="journal article" date="2003" name="Mol. Microbiol.">
        <title>GadE (YhiE) activates glutamate decarboxylase-dependent acid resistance in Escherichia coli K-12.</title>
        <authorList>
            <person name="Ma Z."/>
            <person name="Gong S."/>
            <person name="Richard H."/>
            <person name="Tucker D.L."/>
            <person name="Conway T."/>
            <person name="Foster J.W."/>
        </authorList>
    </citation>
    <scope>TRANSCRIPTIONAL REGULATION</scope>
    <source>
        <strain>K12</strain>
    </source>
</reference>
<reference key="15">
    <citation type="journal article" date="2009" name="Mol. Cell. Proteomics">
        <title>Lysine acetylation is a highly abundant and evolutionarily conserved modification in Escherichia coli.</title>
        <authorList>
            <person name="Zhang J."/>
            <person name="Sprung R."/>
            <person name="Pei J."/>
            <person name="Tan X."/>
            <person name="Kim S."/>
            <person name="Zhu H."/>
            <person name="Liu C.F."/>
            <person name="Grishin N.V."/>
            <person name="Zhao Y."/>
        </authorList>
    </citation>
    <scope>ACETYLATION [LARGE SCALE ANALYSIS] AT LYS-446; LYS-453 AND LYS-464</scope>
    <scope>IDENTIFICATION BY MASS SPECTROMETRY</scope>
    <source>
        <strain>K12 / JW1106</strain>
        <strain>K12 / MG1655 / ATCC 47076</strain>
    </source>
</reference>
<reference key="16">
    <citation type="journal article" date="2003" name="EMBO J.">
        <title>Crystal structure and functional analysis of Escherichia coli glutamate decarboxylase.</title>
        <authorList>
            <person name="Capitani G."/>
            <person name="De Biase D."/>
            <person name="Aurizi C."/>
            <person name="Gut H."/>
            <person name="Bossa F."/>
            <person name="Gruetter M.G."/>
        </authorList>
    </citation>
    <scope>X-RAY CRYSTALLOGRAPHY (2.0 ANGSTROMS)</scope>
    <scope>SUBUNIT</scope>
    <scope>SUBCELLULAR LOCATION</scope>
</reference>
<proteinExistence type="evidence at protein level"/>
<dbReference type="EC" id="4.1.1.15"/>
<dbReference type="EMBL" id="M84025">
    <property type="protein sequence ID" value="AAA23834.1"/>
    <property type="molecule type" value="Genomic_DNA"/>
</dbReference>
<dbReference type="EMBL" id="U00096">
    <property type="protein sequence ID" value="AAC74566.1"/>
    <property type="molecule type" value="Genomic_DNA"/>
</dbReference>
<dbReference type="EMBL" id="AP009048">
    <property type="protein sequence ID" value="BAA15163.1"/>
    <property type="molecule type" value="Genomic_DNA"/>
</dbReference>
<dbReference type="EMBL" id="X71917">
    <property type="protein sequence ID" value="CAA50736.1"/>
    <property type="status" value="ALT_SEQ"/>
    <property type="molecule type" value="Genomic_DNA"/>
</dbReference>
<dbReference type="PIR" id="B43332">
    <property type="entry name" value="B43332"/>
</dbReference>
<dbReference type="RefSeq" id="NP_416010.1">
    <property type="nucleotide sequence ID" value="NC_000913.3"/>
</dbReference>
<dbReference type="RefSeq" id="WP_000358930.1">
    <property type="nucleotide sequence ID" value="NZ_SSUV01000024.1"/>
</dbReference>
<dbReference type="PDB" id="1PMM">
    <property type="method" value="X-ray"/>
    <property type="resolution" value="2.00 A"/>
    <property type="chains" value="A/B/C/D/E/F=1-466"/>
</dbReference>
<dbReference type="PDB" id="1PMO">
    <property type="method" value="X-ray"/>
    <property type="resolution" value="2.30 A"/>
    <property type="chains" value="A/B/C/D/E/F=1-466"/>
</dbReference>
<dbReference type="PDB" id="2DGK">
    <property type="method" value="X-ray"/>
    <property type="resolution" value="1.90 A"/>
    <property type="chains" value="A/B/C/D/E/F=15-466"/>
</dbReference>
<dbReference type="PDB" id="2DGL">
    <property type="method" value="X-ray"/>
    <property type="resolution" value="3.15 A"/>
    <property type="chains" value="A/B/C/D/E/F=1-466"/>
</dbReference>
<dbReference type="PDB" id="2DGM">
    <property type="method" value="X-ray"/>
    <property type="resolution" value="1.95 A"/>
    <property type="chains" value="A/B/C/D/E/F=1-466"/>
</dbReference>
<dbReference type="PDB" id="3FZ6">
    <property type="method" value="X-ray"/>
    <property type="resolution" value="2.82 A"/>
    <property type="chains" value="A/B/C/D/E/F=1-466"/>
</dbReference>
<dbReference type="PDB" id="3FZ7">
    <property type="method" value="X-ray"/>
    <property type="resolution" value="2.50 A"/>
    <property type="chains" value="A/B/C/D/E/F=1-466"/>
</dbReference>
<dbReference type="PDB" id="3FZ8">
    <property type="method" value="X-ray"/>
    <property type="resolution" value="3.00 A"/>
    <property type="chains" value="A/B/C/D/E/F=1-466"/>
</dbReference>
<dbReference type="PDBsum" id="1PMM"/>
<dbReference type="PDBsum" id="1PMO"/>
<dbReference type="PDBsum" id="2DGK"/>
<dbReference type="PDBsum" id="2DGL"/>
<dbReference type="PDBsum" id="2DGM"/>
<dbReference type="PDBsum" id="3FZ6"/>
<dbReference type="PDBsum" id="3FZ7"/>
<dbReference type="PDBsum" id="3FZ8"/>
<dbReference type="SMR" id="P69910"/>
<dbReference type="BioGRID" id="4260788">
    <property type="interactions" value="7"/>
</dbReference>
<dbReference type="BioGRID" id="850419">
    <property type="interactions" value="2"/>
</dbReference>
<dbReference type="DIP" id="DIP-36202N"/>
<dbReference type="FunCoup" id="P69910">
    <property type="interactions" value="875"/>
</dbReference>
<dbReference type="IntAct" id="P69910">
    <property type="interactions" value="16"/>
</dbReference>
<dbReference type="MINT" id="P69910"/>
<dbReference type="STRING" id="511145.b1493"/>
<dbReference type="iPTMnet" id="P69910"/>
<dbReference type="jPOST" id="P69910"/>
<dbReference type="PaxDb" id="511145-b1493"/>
<dbReference type="EnsemblBacteria" id="AAC74566">
    <property type="protein sequence ID" value="AAC74566"/>
    <property type="gene ID" value="b1493"/>
</dbReference>
<dbReference type="GeneID" id="946058"/>
<dbReference type="KEGG" id="ecj:JW1488"/>
<dbReference type="KEGG" id="eco:b1493"/>
<dbReference type="KEGG" id="ecoc:C3026_08645"/>
<dbReference type="PATRIC" id="fig|1411691.4.peg.774"/>
<dbReference type="EchoBASE" id="EB1453"/>
<dbReference type="eggNOG" id="COG0076">
    <property type="taxonomic scope" value="Bacteria"/>
</dbReference>
<dbReference type="HOGENOM" id="CLU_019582_0_0_6"/>
<dbReference type="InParanoid" id="P69910"/>
<dbReference type="OMA" id="ECRDKNM"/>
<dbReference type="OrthoDB" id="9803665at2"/>
<dbReference type="PhylomeDB" id="P69910"/>
<dbReference type="BioCyc" id="EcoCyc:GLUTDECARBOXB-MONOMER"/>
<dbReference type="BioCyc" id="MetaCyc:GLUTDECARBOXB-MONOMER"/>
<dbReference type="BRENDA" id="4.1.1.15">
    <property type="organism ID" value="2026"/>
</dbReference>
<dbReference type="EvolutionaryTrace" id="P69910"/>
<dbReference type="PRO" id="PR:P69910"/>
<dbReference type="Proteomes" id="UP000000625">
    <property type="component" value="Chromosome"/>
</dbReference>
<dbReference type="GO" id="GO:0005829">
    <property type="term" value="C:cytosol"/>
    <property type="evidence" value="ECO:0007005"/>
    <property type="project" value="UniProtKB"/>
</dbReference>
<dbReference type="GO" id="GO:0016020">
    <property type="term" value="C:membrane"/>
    <property type="evidence" value="ECO:0007005"/>
    <property type="project" value="UniProtKB"/>
</dbReference>
<dbReference type="GO" id="GO:0004351">
    <property type="term" value="F:glutamate decarboxylase activity"/>
    <property type="evidence" value="ECO:0000314"/>
    <property type="project" value="EcoCyc"/>
</dbReference>
<dbReference type="GO" id="GO:0030170">
    <property type="term" value="F:pyridoxal phosphate binding"/>
    <property type="evidence" value="ECO:0007669"/>
    <property type="project" value="InterPro"/>
</dbReference>
<dbReference type="GO" id="GO:0006538">
    <property type="term" value="P:glutamate catabolic process"/>
    <property type="evidence" value="ECO:0000318"/>
    <property type="project" value="GO_Central"/>
</dbReference>
<dbReference type="GO" id="GO:0051454">
    <property type="term" value="P:intracellular pH elevation"/>
    <property type="evidence" value="ECO:0000315"/>
    <property type="project" value="EcoCyc"/>
</dbReference>
<dbReference type="CDD" id="cd06450">
    <property type="entry name" value="DOPA_deC_like"/>
    <property type="match status" value="1"/>
</dbReference>
<dbReference type="FunFam" id="3.40.640.10:FF:000017">
    <property type="entry name" value="Glutamate decarboxylase"/>
    <property type="match status" value="1"/>
</dbReference>
<dbReference type="FunFam" id="3.90.1150.160:FF:000002">
    <property type="entry name" value="Glutamate decarboxylase"/>
    <property type="match status" value="1"/>
</dbReference>
<dbReference type="FunFam" id="4.10.280.50:FF:000001">
    <property type="entry name" value="Glutamate decarboxylase"/>
    <property type="match status" value="1"/>
</dbReference>
<dbReference type="Gene3D" id="3.90.1150.160">
    <property type="match status" value="1"/>
</dbReference>
<dbReference type="Gene3D" id="4.10.280.50">
    <property type="match status" value="1"/>
</dbReference>
<dbReference type="Gene3D" id="3.40.640.10">
    <property type="entry name" value="Type I PLP-dependent aspartate aminotransferase-like (Major domain)"/>
    <property type="match status" value="1"/>
</dbReference>
<dbReference type="InterPro" id="IPR010107">
    <property type="entry name" value="Glutamate_decarboxylase"/>
</dbReference>
<dbReference type="InterPro" id="IPR002129">
    <property type="entry name" value="PyrdxlP-dep_de-COase"/>
</dbReference>
<dbReference type="InterPro" id="IPR015424">
    <property type="entry name" value="PyrdxlP-dep_Trfase"/>
</dbReference>
<dbReference type="InterPro" id="IPR015421">
    <property type="entry name" value="PyrdxlP-dep_Trfase_major"/>
</dbReference>
<dbReference type="InterPro" id="IPR021115">
    <property type="entry name" value="Pyridoxal-P_BS"/>
</dbReference>
<dbReference type="NCBIfam" id="TIGR01788">
    <property type="entry name" value="Glu-decarb-GAD"/>
    <property type="match status" value="1"/>
</dbReference>
<dbReference type="PANTHER" id="PTHR43321">
    <property type="entry name" value="GLUTAMATE DECARBOXYLASE"/>
    <property type="match status" value="1"/>
</dbReference>
<dbReference type="PANTHER" id="PTHR43321:SF3">
    <property type="entry name" value="GLUTAMATE DECARBOXYLASE"/>
    <property type="match status" value="1"/>
</dbReference>
<dbReference type="Pfam" id="PF00282">
    <property type="entry name" value="Pyridoxal_deC"/>
    <property type="match status" value="1"/>
</dbReference>
<dbReference type="SUPFAM" id="SSF53383">
    <property type="entry name" value="PLP-dependent transferases"/>
    <property type="match status" value="1"/>
</dbReference>
<dbReference type="PROSITE" id="PS00392">
    <property type="entry name" value="DDC_GAD_HDC_YDC"/>
    <property type="match status" value="1"/>
</dbReference>
<accession>P69910</accession>
<accession>P28302</accession>
<accession>P76873</accession>
<comment type="function">
    <text>Converts glutamate to gamma-aminobutyrate (GABA), consuming one intracellular proton in the reaction. The gad system helps to maintain a near-neutral intracellular pH when cells are exposed to extremely acidic conditions. The ability to survive transit through the acidic conditions of the stomach is essential for successful colonization of the mammalian host by commensal and pathogenic bacteria.</text>
</comment>
<comment type="catalytic activity">
    <reaction>
        <text>L-glutamate + H(+) = 4-aminobutanoate + CO2</text>
        <dbReference type="Rhea" id="RHEA:17785"/>
        <dbReference type="ChEBI" id="CHEBI:15378"/>
        <dbReference type="ChEBI" id="CHEBI:16526"/>
        <dbReference type="ChEBI" id="CHEBI:29985"/>
        <dbReference type="ChEBI" id="CHEBI:59888"/>
        <dbReference type="EC" id="4.1.1.15"/>
    </reaction>
</comment>
<comment type="cofactor">
    <cofactor>
        <name>pyridoxal 5'-phosphate</name>
        <dbReference type="ChEBI" id="CHEBI:597326"/>
    </cofactor>
</comment>
<comment type="subunit">
    <text evidence="8">Homohexamer composed of three dimers.</text>
</comment>
<comment type="interaction">
    <interactant intactId="EBI-549514">
        <id>P69910</id>
    </interactant>
    <interactant intactId="EBI-550911">
        <id>P36879</id>
        <label>yadG</label>
    </interactant>
    <organismsDiffer>false</organismsDiffer>
    <experiments>2</experiments>
</comment>
<comment type="subcellular location">
    <subcellularLocation>
        <location evidence="8">Cytoplasm</location>
    </subcellularLocation>
    <subcellularLocation>
        <location evidence="8">Membrane</location>
    </subcellularLocation>
    <text>Localized exclusively in the cytoplasm at neutral pH, but is recruited to the membrane when the pH falls.</text>
</comment>
<comment type="induction">
    <text evidence="1 2 4 5 6 7 9">By acidic conditions. Expression is regulated by a complex system involving RpoS, cAMP, CRP, EvgAS, H-NS, GadE, GadW and GadX. The level of involvement for each regulator varies depending upon the growth phase and the medium.</text>
</comment>
<comment type="miscellaneous">
    <text>Changing Lys-276 to Ala increases thermal stability and protease resistance. The unfolding temperature is increased by 11 degrees Celsius.</text>
</comment>
<comment type="similarity">
    <text evidence="11">Belongs to the group II decarboxylase family.</text>
</comment>
<sequence length="466" mass="52668">MDKKQVTDLRSELLDSRFGAKSISTIAESKRFPLHEMRDDVAFQIINDELYLDGNARQNLATFCQTWDDENVHKLMDLSINKNWIDKEEYPQSAAIDLRCVNMVADLWHAPAPKNGQAVGTNTIGSSEACMLGGMAMKWRWRKRMEAAGKPTDKPNLVCGPVQICWHKFARYWDVELREIPMRPGQLFMDPKRMIEACDENTIGVVPTFGVTYTGNYEFPQPLHDALDKFQADTGIDIDMHIDAASGGFLAPFVAPDIVWDFRLPRVKSISASGHKFGLAPLGCGWVIWRDEEALPQELVFNVDYLGGQIGTFAINFSRPAGQVIAQYYEFLRLGREGYTKVQNASYQVAAYLADEIAKLGPYEFICTGRPDEGIPAVCFKLKDGEDPGYTLYDLSERLRLRGWQVPAFTLGGEATDIVVMRIMCRRGFEMDFAELLLEDYKASLKYLSDHPKLQGIAQQNSFKHT</sequence>
<evidence type="ECO:0000269" key="1">
    <source>
    </source>
</evidence>
<evidence type="ECO:0000269" key="2">
    <source>
    </source>
</evidence>
<evidence type="ECO:0000269" key="3">
    <source>
    </source>
</evidence>
<evidence type="ECO:0000269" key="4">
    <source>
    </source>
</evidence>
<evidence type="ECO:0000269" key="5">
    <source>
    </source>
</evidence>
<evidence type="ECO:0000269" key="6">
    <source>
    </source>
</evidence>
<evidence type="ECO:0000269" key="7">
    <source>
    </source>
</evidence>
<evidence type="ECO:0000269" key="8">
    <source>
    </source>
</evidence>
<evidence type="ECO:0000269" key="9">
    <source>
    </source>
</evidence>
<evidence type="ECO:0000269" key="10">
    <source>
    </source>
</evidence>
<evidence type="ECO:0000305" key="11"/>
<evidence type="ECO:0007829" key="12">
    <source>
        <dbReference type="PDB" id="1PMO"/>
    </source>
</evidence>
<evidence type="ECO:0007829" key="13">
    <source>
        <dbReference type="PDB" id="2DGK"/>
    </source>
</evidence>
<evidence type="ECO:0007829" key="14">
    <source>
        <dbReference type="PDB" id="2DGM"/>
    </source>
</evidence>
<evidence type="ECO:0007829" key="15">
    <source>
        <dbReference type="PDB" id="3FZ8"/>
    </source>
</evidence>
<name>DCEB_ECOLI</name>
<gene>
    <name type="primary">gadB</name>
    <name type="ordered locus">b1493</name>
    <name type="ordered locus">JW1488</name>
</gene>
<feature type="chain" id="PRO_0000146982" description="Glutamate decarboxylase beta">
    <location>
        <begin position="1"/>
        <end position="466"/>
    </location>
</feature>
<feature type="binding site">
    <location>
        <position position="62"/>
    </location>
    <ligand>
        <name>substrate</name>
    </ligand>
</feature>
<feature type="binding site">
    <location>
        <position position="83"/>
    </location>
    <ligand>
        <name>substrate</name>
    </ligand>
</feature>
<feature type="binding site">
    <location>
        <begin position="126"/>
        <end position="127"/>
    </location>
    <ligand>
        <name>pyridoxal 5'-phosphate</name>
        <dbReference type="ChEBI" id="CHEBI:597326"/>
    </ligand>
</feature>
<feature type="binding site">
    <location>
        <position position="212"/>
    </location>
    <ligand>
        <name>pyridoxal 5'-phosphate</name>
        <dbReference type="ChEBI" id="CHEBI:597326"/>
    </ligand>
</feature>
<feature type="binding site">
    <location>
        <position position="275"/>
    </location>
    <ligand>
        <name>pyridoxal 5'-phosphate</name>
        <dbReference type="ChEBI" id="CHEBI:597326"/>
    </ligand>
</feature>
<feature type="modified residue" description="N6-(pyridoxal phosphate)lysine">
    <location>
        <position position="276"/>
    </location>
</feature>
<feature type="modified residue" description="N6-acetyllysine" evidence="10">
    <location>
        <position position="446"/>
    </location>
</feature>
<feature type="modified residue" description="N6-acetyllysine" evidence="10">
    <location>
        <position position="453"/>
    </location>
</feature>
<feature type="modified residue" description="N6-acetyllysine" evidence="10">
    <location>
        <position position="464"/>
    </location>
</feature>
<feature type="mutagenesis site" description="Strongly reduces pyridoxal phosphate binding and increases stability of the polypeptide." evidence="3">
    <original>K</original>
    <variation>A</variation>
    <location>
        <position position="276"/>
    </location>
</feature>
<feature type="mutagenesis site" description="Abolishes pyridoxal phosphate binding." evidence="3">
    <original>K</original>
    <variation>H</variation>
    <location>
        <position position="276"/>
    </location>
</feature>
<feature type="helix" evidence="14">
    <location>
        <begin position="4"/>
        <end position="14"/>
    </location>
</feature>
<feature type="turn" evidence="14">
    <location>
        <begin position="17"/>
        <end position="19"/>
    </location>
</feature>
<feature type="helix" evidence="14">
    <location>
        <begin position="21"/>
        <end position="23"/>
    </location>
</feature>
<feature type="strand" evidence="15">
    <location>
        <begin position="25"/>
        <end position="28"/>
    </location>
</feature>
<feature type="strand" evidence="12">
    <location>
        <begin position="29"/>
        <end position="31"/>
    </location>
</feature>
<feature type="helix" evidence="13">
    <location>
        <begin position="39"/>
        <end position="49"/>
    </location>
</feature>
<feature type="helix" evidence="13">
    <location>
        <begin position="50"/>
        <end position="52"/>
    </location>
</feature>
<feature type="helix" evidence="14">
    <location>
        <begin position="56"/>
        <end position="58"/>
    </location>
</feature>
<feature type="helix" evidence="13">
    <location>
        <begin position="70"/>
        <end position="78"/>
    </location>
</feature>
<feature type="turn" evidence="13">
    <location>
        <begin position="79"/>
        <end position="81"/>
    </location>
</feature>
<feature type="turn" evidence="13">
    <location>
        <begin position="87"/>
        <end position="89"/>
    </location>
</feature>
<feature type="helix" evidence="13">
    <location>
        <begin position="91"/>
        <end position="107"/>
    </location>
</feature>
<feature type="strand" evidence="12">
    <location>
        <begin position="114"/>
        <end position="116"/>
    </location>
</feature>
<feature type="strand" evidence="13">
    <location>
        <begin position="119"/>
        <end position="125"/>
    </location>
</feature>
<feature type="helix" evidence="13">
    <location>
        <begin position="126"/>
        <end position="147"/>
    </location>
</feature>
<feature type="strand" evidence="13">
    <location>
        <begin position="156"/>
        <end position="161"/>
    </location>
</feature>
<feature type="helix" evidence="13">
    <location>
        <begin position="164"/>
        <end position="172"/>
    </location>
</feature>
<feature type="strand" evidence="13">
    <location>
        <begin position="176"/>
        <end position="179"/>
    </location>
</feature>
<feature type="helix" evidence="13">
    <location>
        <begin position="191"/>
        <end position="197"/>
    </location>
</feature>
<feature type="strand" evidence="13">
    <location>
        <begin position="202"/>
        <end position="206"/>
    </location>
</feature>
<feature type="strand" evidence="13">
    <location>
        <begin position="208"/>
        <end position="210"/>
    </location>
</feature>
<feature type="turn" evidence="13">
    <location>
        <begin position="212"/>
        <end position="214"/>
    </location>
</feature>
<feature type="helix" evidence="13">
    <location>
        <begin position="220"/>
        <end position="234"/>
    </location>
</feature>
<feature type="strand" evidence="13">
    <location>
        <begin position="240"/>
        <end position="243"/>
    </location>
</feature>
<feature type="helix" evidence="13">
    <location>
        <begin position="247"/>
        <end position="249"/>
    </location>
</feature>
<feature type="helix" evidence="13">
    <location>
        <begin position="251"/>
        <end position="254"/>
    </location>
</feature>
<feature type="strand" evidence="13">
    <location>
        <begin position="267"/>
        <end position="273"/>
    </location>
</feature>
<feature type="turn" evidence="13">
    <location>
        <begin position="274"/>
        <end position="278"/>
    </location>
</feature>
<feature type="strand" evidence="13">
    <location>
        <begin position="285"/>
        <end position="291"/>
    </location>
</feature>
<feature type="helix" evidence="13">
    <location>
        <begin position="292"/>
        <end position="294"/>
    </location>
</feature>
<feature type="helix" evidence="13">
    <location>
        <begin position="297"/>
        <end position="299"/>
    </location>
</feature>
<feature type="strand" evidence="13">
    <location>
        <begin position="301"/>
        <end position="303"/>
    </location>
</feature>
<feature type="strand" evidence="13">
    <location>
        <begin position="310"/>
        <end position="312"/>
    </location>
</feature>
<feature type="helix" evidence="13">
    <location>
        <begin position="322"/>
        <end position="358"/>
    </location>
</feature>
<feature type="strand" evidence="13">
    <location>
        <begin position="361"/>
        <end position="368"/>
    </location>
</feature>
<feature type="turn" evidence="13">
    <location>
        <begin position="371"/>
        <end position="373"/>
    </location>
</feature>
<feature type="strand" evidence="13">
    <location>
        <begin position="374"/>
        <end position="382"/>
    </location>
</feature>
<feature type="helix" evidence="13">
    <location>
        <begin position="392"/>
        <end position="401"/>
    </location>
</feature>
<feature type="strand" evidence="13">
    <location>
        <begin position="408"/>
        <end position="410"/>
    </location>
</feature>
<feature type="helix" evidence="14">
    <location>
        <begin position="413"/>
        <end position="415"/>
    </location>
</feature>
<feature type="strand" evidence="13">
    <location>
        <begin position="419"/>
        <end position="424"/>
    </location>
</feature>
<feature type="helix" evidence="13">
    <location>
        <begin position="431"/>
        <end position="450"/>
    </location>
</feature>
<feature type="helix" evidence="13">
    <location>
        <begin position="452"/>
        <end position="454"/>
    </location>
</feature>
<keyword id="KW-0002">3D-structure</keyword>
<keyword id="KW-0007">Acetylation</keyword>
<keyword id="KW-0963">Cytoplasm</keyword>
<keyword id="KW-0210">Decarboxylase</keyword>
<keyword id="KW-0903">Direct protein sequencing</keyword>
<keyword id="KW-0456">Lyase</keyword>
<keyword id="KW-0472">Membrane</keyword>
<keyword id="KW-0663">Pyridoxal phosphate</keyword>
<keyword id="KW-1185">Reference proteome</keyword>